<name>TL16_SPIOL</name>
<dbReference type="SMR" id="P81834"/>
<dbReference type="Proteomes" id="UP001155700">
    <property type="component" value="Unplaced"/>
</dbReference>
<dbReference type="GO" id="GO:0009543">
    <property type="term" value="C:chloroplast thylakoid lumen"/>
    <property type="evidence" value="ECO:0007669"/>
    <property type="project" value="UniProtKB-SubCell"/>
</dbReference>
<evidence type="ECO:0000269" key="1">
    <source>
    </source>
</evidence>
<evidence type="ECO:0000269" key="2">
    <source>
    </source>
</evidence>
<evidence type="ECO:0000305" key="3"/>
<reference key="1">
    <citation type="journal article" date="2002" name="J. Biol. Chem.">
        <title>Proteome map of the chloroplast lumen of Arabidopsis thaliana.</title>
        <authorList>
            <person name="Schubert M."/>
            <person name="Petersson U.A."/>
            <person name="Haas B.J."/>
            <person name="Funk C."/>
            <person name="Schroeder W.P."/>
            <person name="Kieselbach T."/>
        </authorList>
    </citation>
    <scope>PROTEIN SEQUENCE</scope>
    <scope>SUBCELLULAR LOCATION</scope>
    <scope>MASS SPECTROMETRY</scope>
    <source>
        <tissue>Leaf</tissue>
    </source>
</reference>
<reference key="2">
    <citation type="journal article" date="1998" name="J. Biol. Chem.">
        <title>The thylakoid lumen of chloroplasts. Isolation and characterization.</title>
        <authorList>
            <person name="Kieselbach T."/>
            <person name="Hagman A."/>
            <person name="Andersson B."/>
            <person name="Schroeder W.P."/>
        </authorList>
    </citation>
    <scope>PROTEIN SEQUENCE OF 1-29</scope>
    <scope>SUBCELLULAR LOCATION</scope>
    <source>
        <tissue>Leaf</tissue>
    </source>
</reference>
<feature type="chain" id="PRO_0000072556" description="Thylakoid lumenal 13.3 kDa protein">
    <location>
        <begin position="1"/>
        <end position="30" status="greater than"/>
    </location>
</feature>
<feature type="non-terminal residue">
    <location>
        <position position="30"/>
    </location>
</feature>
<keyword id="KW-0150">Chloroplast</keyword>
<keyword id="KW-0903">Direct protein sequencing</keyword>
<keyword id="KW-0934">Plastid</keyword>
<keyword id="KW-1185">Reference proteome</keyword>
<keyword id="KW-0793">Thylakoid</keyword>
<organism>
    <name type="scientific">Spinacia oleracea</name>
    <name type="common">Spinach</name>
    <dbReference type="NCBI Taxonomy" id="3562"/>
    <lineage>
        <taxon>Eukaryota</taxon>
        <taxon>Viridiplantae</taxon>
        <taxon>Streptophyta</taxon>
        <taxon>Embryophyta</taxon>
        <taxon>Tracheophyta</taxon>
        <taxon>Spermatophyta</taxon>
        <taxon>Magnoliopsida</taxon>
        <taxon>eudicotyledons</taxon>
        <taxon>Gunneridae</taxon>
        <taxon>Pentapetalae</taxon>
        <taxon>Caryophyllales</taxon>
        <taxon>Chenopodiaceae</taxon>
        <taxon>Chenopodioideae</taxon>
        <taxon>Anserineae</taxon>
        <taxon>Spinacia</taxon>
    </lineage>
</organism>
<accession>P81834</accession>
<protein>
    <recommendedName>
        <fullName>Thylakoid lumenal 13.3 kDa protein</fullName>
    </recommendedName>
    <alternativeName>
        <fullName>P16.5</fullName>
    </alternativeName>
</protein>
<sequence>APLEDEDDLELLEKVKRDRKKRLERQGAIN</sequence>
<comment type="subcellular location">
    <subcellularLocation>
        <location evidence="1 2">Plastid</location>
        <location evidence="1 2">Chloroplast thylakoid lumen</location>
    </subcellularLocation>
</comment>
<comment type="mass spectrometry"/>
<comment type="similarity">
    <text evidence="3">To A.thaliana At4g02530.</text>
</comment>
<proteinExistence type="evidence at protein level"/>